<dbReference type="EMBL" id="CH476628">
    <property type="protein sequence ID" value="EDO03882.1"/>
    <property type="molecule type" value="Genomic_DNA"/>
</dbReference>
<dbReference type="RefSeq" id="XP_001592124.1">
    <property type="nucleotide sequence ID" value="XM_001592074.1"/>
</dbReference>
<dbReference type="SMR" id="A7EM16"/>
<dbReference type="FunCoup" id="A7EM16">
    <property type="interactions" value="131"/>
</dbReference>
<dbReference type="STRING" id="665079.A7EM16"/>
<dbReference type="GeneID" id="5488443"/>
<dbReference type="KEGG" id="ssl:SS1G_06363"/>
<dbReference type="VEuPathDB" id="FungiDB:sscle_13g092360"/>
<dbReference type="InParanoid" id="A7EM16"/>
<dbReference type="OMA" id="THVWRAN"/>
<dbReference type="OrthoDB" id="1937984at2759"/>
<dbReference type="Proteomes" id="UP000001312">
    <property type="component" value="Unassembled WGS sequence"/>
</dbReference>
<dbReference type="GO" id="GO:1990316">
    <property type="term" value="C:Atg1/ULK1 kinase complex"/>
    <property type="evidence" value="ECO:0000318"/>
    <property type="project" value="GO_Central"/>
</dbReference>
<dbReference type="GO" id="GO:0000407">
    <property type="term" value="C:phagophore assembly site"/>
    <property type="evidence" value="ECO:0000318"/>
    <property type="project" value="GO_Central"/>
</dbReference>
<dbReference type="GO" id="GO:0034045">
    <property type="term" value="C:phagophore assembly site membrane"/>
    <property type="evidence" value="ECO:0007669"/>
    <property type="project" value="UniProtKB-SubCell"/>
</dbReference>
<dbReference type="GO" id="GO:0060090">
    <property type="term" value="F:molecular adaptor activity"/>
    <property type="evidence" value="ECO:0000318"/>
    <property type="project" value="GO_Central"/>
</dbReference>
<dbReference type="GO" id="GO:0030295">
    <property type="term" value="F:protein kinase activator activity"/>
    <property type="evidence" value="ECO:0000318"/>
    <property type="project" value="GO_Central"/>
</dbReference>
<dbReference type="GO" id="GO:0000045">
    <property type="term" value="P:autophagosome assembly"/>
    <property type="evidence" value="ECO:0000318"/>
    <property type="project" value="GO_Central"/>
</dbReference>
<dbReference type="GO" id="GO:0000423">
    <property type="term" value="P:mitophagy"/>
    <property type="evidence" value="ECO:0000318"/>
    <property type="project" value="GO_Central"/>
</dbReference>
<dbReference type="GO" id="GO:0000425">
    <property type="term" value="P:pexophagy"/>
    <property type="evidence" value="ECO:0000318"/>
    <property type="project" value="GO_Central"/>
</dbReference>
<dbReference type="GO" id="GO:0034727">
    <property type="term" value="P:piecemeal microautophagy of the nucleus"/>
    <property type="evidence" value="ECO:0000318"/>
    <property type="project" value="GO_Central"/>
</dbReference>
<dbReference type="InterPro" id="IPR007240">
    <property type="entry name" value="Atg17"/>
</dbReference>
<dbReference type="InterPro" id="IPR045326">
    <property type="entry name" value="ATG17-like_dom"/>
</dbReference>
<dbReference type="PANTHER" id="PTHR28005">
    <property type="entry name" value="AUTOPHAGY-RELATED PROTEIN 17"/>
    <property type="match status" value="1"/>
</dbReference>
<dbReference type="PANTHER" id="PTHR28005:SF1">
    <property type="entry name" value="AUTOPHAGY-RELATED PROTEIN 17"/>
    <property type="match status" value="1"/>
</dbReference>
<dbReference type="Pfam" id="PF04108">
    <property type="entry name" value="ATG17_like"/>
    <property type="match status" value="1"/>
</dbReference>
<reference key="1">
    <citation type="journal article" date="2011" name="PLoS Genet.">
        <title>Genomic analysis of the necrotrophic fungal pathogens Sclerotinia sclerotiorum and Botrytis cinerea.</title>
        <authorList>
            <person name="Amselem J."/>
            <person name="Cuomo C.A."/>
            <person name="van Kan J.A.L."/>
            <person name="Viaud M."/>
            <person name="Benito E.P."/>
            <person name="Couloux A."/>
            <person name="Coutinho P.M."/>
            <person name="de Vries R.P."/>
            <person name="Dyer P.S."/>
            <person name="Fillinger S."/>
            <person name="Fournier E."/>
            <person name="Gout L."/>
            <person name="Hahn M."/>
            <person name="Kohn L."/>
            <person name="Lapalu N."/>
            <person name="Plummer K.M."/>
            <person name="Pradier J.-M."/>
            <person name="Quevillon E."/>
            <person name="Sharon A."/>
            <person name="Simon A."/>
            <person name="ten Have A."/>
            <person name="Tudzynski B."/>
            <person name="Tudzynski P."/>
            <person name="Wincker P."/>
            <person name="Andrew M."/>
            <person name="Anthouard V."/>
            <person name="Beever R.E."/>
            <person name="Beffa R."/>
            <person name="Benoit I."/>
            <person name="Bouzid O."/>
            <person name="Brault B."/>
            <person name="Chen Z."/>
            <person name="Choquer M."/>
            <person name="Collemare J."/>
            <person name="Cotton P."/>
            <person name="Danchin E.G."/>
            <person name="Da Silva C."/>
            <person name="Gautier A."/>
            <person name="Giraud C."/>
            <person name="Giraud T."/>
            <person name="Gonzalez C."/>
            <person name="Grossetete S."/>
            <person name="Gueldener U."/>
            <person name="Henrissat B."/>
            <person name="Howlett B.J."/>
            <person name="Kodira C."/>
            <person name="Kretschmer M."/>
            <person name="Lappartient A."/>
            <person name="Leroch M."/>
            <person name="Levis C."/>
            <person name="Mauceli E."/>
            <person name="Neuveglise C."/>
            <person name="Oeser B."/>
            <person name="Pearson M."/>
            <person name="Poulain J."/>
            <person name="Poussereau N."/>
            <person name="Quesneville H."/>
            <person name="Rascle C."/>
            <person name="Schumacher J."/>
            <person name="Segurens B."/>
            <person name="Sexton A."/>
            <person name="Silva E."/>
            <person name="Sirven C."/>
            <person name="Soanes D.M."/>
            <person name="Talbot N.J."/>
            <person name="Templeton M."/>
            <person name="Yandava C."/>
            <person name="Yarden O."/>
            <person name="Zeng Q."/>
            <person name="Rollins J.A."/>
            <person name="Lebrun M.-H."/>
            <person name="Dickman M."/>
        </authorList>
    </citation>
    <scope>NUCLEOTIDE SEQUENCE [LARGE SCALE GENOMIC DNA]</scope>
    <source>
        <strain>ATCC 18683 / 1980 / Ss-1</strain>
    </source>
</reference>
<organism>
    <name type="scientific">Sclerotinia sclerotiorum (strain ATCC 18683 / 1980 / Ss-1)</name>
    <name type="common">White mold</name>
    <name type="synonym">Whetzelinia sclerotiorum</name>
    <dbReference type="NCBI Taxonomy" id="665079"/>
    <lineage>
        <taxon>Eukaryota</taxon>
        <taxon>Fungi</taxon>
        <taxon>Dikarya</taxon>
        <taxon>Ascomycota</taxon>
        <taxon>Pezizomycotina</taxon>
        <taxon>Leotiomycetes</taxon>
        <taxon>Helotiales</taxon>
        <taxon>Sclerotiniaceae</taxon>
        <taxon>Sclerotinia</taxon>
    </lineage>
</organism>
<keyword id="KW-0072">Autophagy</keyword>
<keyword id="KW-0963">Cytoplasm</keyword>
<keyword id="KW-0472">Membrane</keyword>
<keyword id="KW-1185">Reference proteome</keyword>
<feature type="chain" id="PRO_0000317988" description="Autophagy-related protein 17">
    <location>
        <begin position="1"/>
        <end position="492"/>
    </location>
</feature>
<feature type="region of interest" description="Disordered" evidence="2">
    <location>
        <begin position="1"/>
        <end position="23"/>
    </location>
</feature>
<feature type="region of interest" description="Disordered" evidence="2">
    <location>
        <begin position="469"/>
        <end position="492"/>
    </location>
</feature>
<feature type="compositionally biased region" description="Polar residues" evidence="2">
    <location>
        <begin position="1"/>
        <end position="20"/>
    </location>
</feature>
<feature type="compositionally biased region" description="Basic and acidic residues" evidence="2">
    <location>
        <begin position="475"/>
        <end position="492"/>
    </location>
</feature>
<evidence type="ECO:0000250" key="1"/>
<evidence type="ECO:0000256" key="2">
    <source>
        <dbReference type="SAM" id="MobiDB-lite"/>
    </source>
</evidence>
<evidence type="ECO:0000305" key="3"/>
<gene>
    <name type="primary">atg17</name>
    <name type="ORF">SS1G_06363</name>
</gene>
<proteinExistence type="inferred from homology"/>
<accession>A7EM16</accession>
<protein>
    <recommendedName>
        <fullName>Autophagy-related protein 17</fullName>
    </recommendedName>
</protein>
<comment type="function">
    <text evidence="1">Autophagy-specific protein that functions in response to autophagy-inducing signals as a scaffold to recruit other ATG proteins to organize pre-autophagosomal structure (PAS) formation. Modulates the timing and magnitude of the autophagy response, such as the size of the sequestering vesicles. Plays particularly a role in pexophagy and nucleophagy (By similarity).</text>
</comment>
<comment type="subcellular location">
    <subcellularLocation>
        <location evidence="1">Cytoplasm</location>
    </subcellularLocation>
    <subcellularLocation>
        <location evidence="1">Preautophagosomal structure membrane</location>
        <topology evidence="1">Peripheral membrane protein</topology>
    </subcellularLocation>
</comment>
<comment type="similarity">
    <text evidence="3">Belongs to the ATG17 family.</text>
</comment>
<sequence>MASPTNAPGSQSQTSVSSANHPDPIIHGREILETLVSHLLASKRSLSSISTVWRANEIVTSAKTALEESVILNARTGFLQSGINEQMKVLMKVRNSIECVYNDGQKDFKNVLHTLDAANARLESTMDVLRSTMVDAAFRPAGEEPRSLLDFVDEQGVEGMRDGLKELIRESKETQKEFDTSLLSFDDDLRSLRSGFKNTKVSPPSYSPIPSHLATLEGHAQEMAALLSSLSSHFDLCLNAIRHTEGGYAAVRNAASNPPPGAEPVSVSGVMNTSHDDINEEPLTEHEREEMLFVLEKDAAEVEDVVMELRDRQNEMEIKHDAILDHVSHLTEQFKQTTSIYKILEGVYERLPGYIIAGQDFRARWEDTKAQICGQMDDLEGMRLFYENYLSSYDGLILEVRRRKVAEEKAKTIAKKAMEQISKIYDADMKERHDFKHDVGDYLPVDLYPGINAAAPRWEFRLMEDEEAVNSSPSLERELVEVSSKRDGEAQG</sequence>
<name>ATG17_SCLS1</name>